<sequence>MAFVSRIRRQSDYNTYPSSIPIVIDNGASYFRIGWAGETEPRVVFRNIVQRPRHKATGETVTIVGDLDPSMMKYFDCTRSGPRSPFDSNVVYQFEIMEYILDYAFDRLGANGSGIDHPILITECACNPVQSRSKMAELLFETYGVPAVAFGVDAAFSYKYNQLHGICKKDGIVLCPGFTTTHSIPFVDGEPIYKGSSRTNIGGYHVTDYLKQLLSLKYPFHSSRFTWEKAEDLKLEHCYIAPDYASEIRLFQEGRKEAEEKTSYWQLPWIPPPTEVPPSEEEIARKAAIREKQGQRLREMAEAKRVSKINDMENQLISLRFLLKQVDQVEEDDIPTFLSDTGYASRQELESTITKVTQSLRKARGEPKNEPAEYEENPDSLNNEKYPLMNVPDDILTPEQLKDKKRQMFLKTTAEGRLRARQKRNEEELEKEKRNQLEEERRRENPESYLEELQAQYKEVLERVEQKKRLKTNGSSNGNNKSGGIGRGERLSAAQRERMRLLTTAAFDRGKGEDTFGSRDEDWQLYKLMSKDNDDDDEQPDSDEAELARLSSRLQEIDPTFVQKVEGELSQTSGEVPRVRPLTEEDYKIVIGIERFRCPEILFHPNLIGIDQVGLDEMAGTSIRRLPHDEKELEERLTSSILMTGGCSLLPGMNERLECGIRMIRPCGSPINVVRAMDPVLDAWRGASAFAANLNFLGNAFTKMDYDEKGEDWLRNYQIRYNYL</sequence>
<organism>
    <name type="scientific">Arabidopsis thaliana</name>
    <name type="common">Mouse-ear cress</name>
    <dbReference type="NCBI Taxonomy" id="3702"/>
    <lineage>
        <taxon>Eukaryota</taxon>
        <taxon>Viridiplantae</taxon>
        <taxon>Streptophyta</taxon>
        <taxon>Embryophyta</taxon>
        <taxon>Tracheophyta</taxon>
        <taxon>Spermatophyta</taxon>
        <taxon>Magnoliopsida</taxon>
        <taxon>eudicotyledons</taxon>
        <taxon>Gunneridae</taxon>
        <taxon>Pentapetalae</taxon>
        <taxon>rosids</taxon>
        <taxon>malvids</taxon>
        <taxon>Brassicales</taxon>
        <taxon>Brassicaceae</taxon>
        <taxon>Camelineae</taxon>
        <taxon>Arabidopsis</taxon>
    </lineage>
</organism>
<keyword id="KW-0025">Alternative splicing</keyword>
<keyword id="KW-0963">Cytoplasm</keyword>
<keyword id="KW-0227">DNA damage</keyword>
<keyword id="KW-0234">DNA repair</keyword>
<keyword id="KW-0539">Nucleus</keyword>
<keyword id="KW-0597">Phosphoprotein</keyword>
<keyword id="KW-1185">Reference proteome</keyword>
<reference key="1">
    <citation type="journal article" date="2009" name="Dev. Biol.">
        <title>Arabidopsis actin-related protein ARP5 in multicellular development and DNA repair.</title>
        <authorList>
            <person name="Kandasamy M.K."/>
            <person name="McKinney E.C."/>
            <person name="Deal R.B."/>
            <person name="Smith A.P."/>
            <person name="Meagher R.B."/>
        </authorList>
    </citation>
    <scope>NUCLEOTIDE SEQUENCE [GENOMIC DNA / MRNA] (ISOFORM 1)</scope>
    <scope>FUNCTION</scope>
    <scope>DISRUPTION PHENOTYPE</scope>
    <scope>SUBCELLULAR LOCATION</scope>
    <scope>TISSUE SPECIFICITY</scope>
    <source>
        <strain>cv. Columbia</strain>
    </source>
</reference>
<reference key="2">
    <citation type="journal article" date="2000" name="DNA Res.">
        <title>Structural analysis of Arabidopsis thaliana chromosome 3. II. Sequence features of the 4,251,695 bp regions covered by 90 P1, TAC and BAC clones.</title>
        <authorList>
            <person name="Kaneko T."/>
            <person name="Katoh T."/>
            <person name="Sato S."/>
            <person name="Nakamura Y."/>
            <person name="Asamizu E."/>
            <person name="Tabata S."/>
        </authorList>
    </citation>
    <scope>NUCLEOTIDE SEQUENCE [LARGE SCALE GENOMIC DNA]</scope>
    <source>
        <strain>cv. Columbia</strain>
    </source>
</reference>
<reference key="3">
    <citation type="journal article" date="2000" name="Nature">
        <title>Sequence and analysis of chromosome 3 of the plant Arabidopsis thaliana.</title>
        <authorList>
            <person name="Salanoubat M."/>
            <person name="Lemcke K."/>
            <person name="Rieger M."/>
            <person name="Ansorge W."/>
            <person name="Unseld M."/>
            <person name="Fartmann B."/>
            <person name="Valle G."/>
            <person name="Bloecker H."/>
            <person name="Perez-Alonso M."/>
            <person name="Obermaier B."/>
            <person name="Delseny M."/>
            <person name="Boutry M."/>
            <person name="Grivell L.A."/>
            <person name="Mache R."/>
            <person name="Puigdomenech P."/>
            <person name="De Simone V."/>
            <person name="Choisne N."/>
            <person name="Artiguenave F."/>
            <person name="Robert C."/>
            <person name="Brottier P."/>
            <person name="Wincker P."/>
            <person name="Cattolico L."/>
            <person name="Weissenbach J."/>
            <person name="Saurin W."/>
            <person name="Quetier F."/>
            <person name="Schaefer M."/>
            <person name="Mueller-Auer S."/>
            <person name="Gabel C."/>
            <person name="Fuchs M."/>
            <person name="Benes V."/>
            <person name="Wurmbach E."/>
            <person name="Drzonek H."/>
            <person name="Erfle H."/>
            <person name="Jordan N."/>
            <person name="Bangert S."/>
            <person name="Wiedelmann R."/>
            <person name="Kranz H."/>
            <person name="Voss H."/>
            <person name="Holland R."/>
            <person name="Brandt P."/>
            <person name="Nyakatura G."/>
            <person name="Vezzi A."/>
            <person name="D'Angelo M."/>
            <person name="Pallavicini A."/>
            <person name="Toppo S."/>
            <person name="Simionati B."/>
            <person name="Conrad A."/>
            <person name="Hornischer K."/>
            <person name="Kauer G."/>
            <person name="Loehnert T.-H."/>
            <person name="Nordsiek G."/>
            <person name="Reichelt J."/>
            <person name="Scharfe M."/>
            <person name="Schoen O."/>
            <person name="Bargues M."/>
            <person name="Terol J."/>
            <person name="Climent J."/>
            <person name="Navarro P."/>
            <person name="Collado C."/>
            <person name="Perez-Perez A."/>
            <person name="Ottenwaelder B."/>
            <person name="Duchemin D."/>
            <person name="Cooke R."/>
            <person name="Laudie M."/>
            <person name="Berger-Llauro C."/>
            <person name="Purnelle B."/>
            <person name="Masuy D."/>
            <person name="de Haan M."/>
            <person name="Maarse A.C."/>
            <person name="Alcaraz J.-P."/>
            <person name="Cottet A."/>
            <person name="Casacuberta E."/>
            <person name="Monfort A."/>
            <person name="Argiriou A."/>
            <person name="Flores M."/>
            <person name="Liguori R."/>
            <person name="Vitale D."/>
            <person name="Mannhaupt G."/>
            <person name="Haase D."/>
            <person name="Schoof H."/>
            <person name="Rudd S."/>
            <person name="Zaccaria P."/>
            <person name="Mewes H.-W."/>
            <person name="Mayer K.F.X."/>
            <person name="Kaul S."/>
            <person name="Town C.D."/>
            <person name="Koo H.L."/>
            <person name="Tallon L.J."/>
            <person name="Jenkins J."/>
            <person name="Rooney T."/>
            <person name="Rizzo M."/>
            <person name="Walts A."/>
            <person name="Utterback T."/>
            <person name="Fujii C.Y."/>
            <person name="Shea T.P."/>
            <person name="Creasy T.H."/>
            <person name="Haas B."/>
            <person name="Maiti R."/>
            <person name="Wu D."/>
            <person name="Peterson J."/>
            <person name="Van Aken S."/>
            <person name="Pai G."/>
            <person name="Militscher J."/>
            <person name="Sellers P."/>
            <person name="Gill J.E."/>
            <person name="Feldblyum T.V."/>
            <person name="Preuss D."/>
            <person name="Lin X."/>
            <person name="Nierman W.C."/>
            <person name="Salzberg S.L."/>
            <person name="White O."/>
            <person name="Venter J.C."/>
            <person name="Fraser C.M."/>
            <person name="Kaneko T."/>
            <person name="Nakamura Y."/>
            <person name="Sato S."/>
            <person name="Kato T."/>
            <person name="Asamizu E."/>
            <person name="Sasamoto S."/>
            <person name="Kimura T."/>
            <person name="Idesawa K."/>
            <person name="Kawashima K."/>
            <person name="Kishida Y."/>
            <person name="Kiyokawa C."/>
            <person name="Kohara M."/>
            <person name="Matsumoto M."/>
            <person name="Matsuno A."/>
            <person name="Muraki A."/>
            <person name="Nakayama S."/>
            <person name="Nakazaki N."/>
            <person name="Shinpo S."/>
            <person name="Takeuchi C."/>
            <person name="Wada T."/>
            <person name="Watanabe A."/>
            <person name="Yamada M."/>
            <person name="Yasuda M."/>
            <person name="Tabata S."/>
        </authorList>
    </citation>
    <scope>NUCLEOTIDE SEQUENCE [LARGE SCALE GENOMIC DNA]</scope>
    <source>
        <strain>cv. Columbia</strain>
    </source>
</reference>
<reference key="4">
    <citation type="journal article" date="2017" name="Plant J.">
        <title>Araport11: a complete reannotation of the Arabidopsis thaliana reference genome.</title>
        <authorList>
            <person name="Cheng C.Y."/>
            <person name="Krishnakumar V."/>
            <person name="Chan A.P."/>
            <person name="Thibaud-Nissen F."/>
            <person name="Schobel S."/>
            <person name="Town C.D."/>
        </authorList>
    </citation>
    <scope>GENOME REANNOTATION</scope>
    <source>
        <strain>cv. Columbia</strain>
    </source>
</reference>
<reference key="5">
    <citation type="journal article" date="2003" name="Science">
        <title>Empirical analysis of transcriptional activity in the Arabidopsis genome.</title>
        <authorList>
            <person name="Yamada K."/>
            <person name="Lim J."/>
            <person name="Dale J.M."/>
            <person name="Chen H."/>
            <person name="Shinn P."/>
            <person name="Palm C.J."/>
            <person name="Southwick A.M."/>
            <person name="Wu H.C."/>
            <person name="Kim C.J."/>
            <person name="Nguyen M."/>
            <person name="Pham P.K."/>
            <person name="Cheuk R.F."/>
            <person name="Karlin-Newmann G."/>
            <person name="Liu S.X."/>
            <person name="Lam B."/>
            <person name="Sakano H."/>
            <person name="Wu T."/>
            <person name="Yu G."/>
            <person name="Miranda M."/>
            <person name="Quach H.L."/>
            <person name="Tripp M."/>
            <person name="Chang C.H."/>
            <person name="Lee J.M."/>
            <person name="Toriumi M.J."/>
            <person name="Chan M.M."/>
            <person name="Tang C.C."/>
            <person name="Onodera C.S."/>
            <person name="Deng J.M."/>
            <person name="Akiyama K."/>
            <person name="Ansari Y."/>
            <person name="Arakawa T."/>
            <person name="Banh J."/>
            <person name="Banno F."/>
            <person name="Bowser L."/>
            <person name="Brooks S.Y."/>
            <person name="Carninci P."/>
            <person name="Chao Q."/>
            <person name="Choy N."/>
            <person name="Enju A."/>
            <person name="Goldsmith A.D."/>
            <person name="Gurjal M."/>
            <person name="Hansen N.F."/>
            <person name="Hayashizaki Y."/>
            <person name="Johnson-Hopson C."/>
            <person name="Hsuan V.W."/>
            <person name="Iida K."/>
            <person name="Karnes M."/>
            <person name="Khan S."/>
            <person name="Koesema E."/>
            <person name="Ishida J."/>
            <person name="Jiang P.X."/>
            <person name="Jones T."/>
            <person name="Kawai J."/>
            <person name="Kamiya A."/>
            <person name="Meyers C."/>
            <person name="Nakajima M."/>
            <person name="Narusaka M."/>
            <person name="Seki M."/>
            <person name="Sakurai T."/>
            <person name="Satou M."/>
            <person name="Tamse R."/>
            <person name="Vaysberg M."/>
            <person name="Wallender E.K."/>
            <person name="Wong C."/>
            <person name="Yamamura Y."/>
            <person name="Yuan S."/>
            <person name="Shinozaki K."/>
            <person name="Davis R.W."/>
            <person name="Theologis A."/>
            <person name="Ecker J.R."/>
        </authorList>
    </citation>
    <scope>NUCLEOTIDE SEQUENCE [LARGE SCALE MRNA] (ISOFORM 3)</scope>
    <source>
        <strain>cv. Columbia</strain>
    </source>
</reference>
<reference key="6">
    <citation type="journal article" date="2009" name="DNA Res.">
        <title>Analysis of multiple occurrences of alternative splicing events in Arabidopsis thaliana using novel sequenced full-length cDNAs.</title>
        <authorList>
            <person name="Iida K."/>
            <person name="Fukami-Kobayashi K."/>
            <person name="Toyoda A."/>
            <person name="Sakaki Y."/>
            <person name="Kobayashi M."/>
            <person name="Seki M."/>
            <person name="Shinozaki K."/>
        </authorList>
    </citation>
    <scope>NUCLEOTIDE SEQUENCE [LARGE SCALE MRNA] (ISOFORM 2)</scope>
    <source>
        <strain>cv. Columbia</strain>
        <tissue>Rosette leaf</tissue>
    </source>
</reference>
<reference key="7">
    <citation type="journal article" date="2002" name="Plant Physiol.">
        <title>Arabidopsis contains ancient classes of differentially expressed actin-related protein genes.</title>
        <authorList>
            <person name="McKinney E.C."/>
            <person name="Kandasamy M.K."/>
            <person name="Meagher R.B."/>
        </authorList>
    </citation>
    <scope>GENE FAMILY</scope>
    <source>
        <strain>cv. Columbia</strain>
    </source>
</reference>
<reference key="8">
    <citation type="journal article" date="2004" name="Trends Plant Sci.">
        <title>Plant actin-related proteins.</title>
        <authorList>
            <person name="Kandasamy M.K."/>
            <person name="Deal R.B."/>
            <person name="McKinney E.C."/>
            <person name="Meagher R.B."/>
        </authorList>
    </citation>
    <scope>REVIEW</scope>
    <scope>GENE FAMILY</scope>
    <scope>NOMENCLATURE</scope>
</reference>
<reference key="9">
    <citation type="journal article" date="2009" name="J. Proteomics">
        <title>Phosphoproteomic analysis of nuclei-enriched fractions from Arabidopsis thaliana.</title>
        <authorList>
            <person name="Jones A.M.E."/>
            <person name="MacLean D."/>
            <person name="Studholme D.J."/>
            <person name="Serna-Sanz A."/>
            <person name="Andreasson E."/>
            <person name="Rathjen J.P."/>
            <person name="Peck S.C."/>
        </authorList>
    </citation>
    <scope>SUBCELLULAR LOCATION</scope>
    <scope>PHOSPHORYLATION [LARGE SCALE ANALYSIS] AT SER-542</scope>
    <scope>IDENTIFICATION BY MASS SPECTROMETRY [LARGE SCALE ANALYSIS]</scope>
    <source>
        <strain>cv. Columbia</strain>
    </source>
</reference>
<reference key="10">
    <citation type="journal article" date="2019" name="Elife">
        <title>Epigenetic silencing of a multifunctional plant stress regulator.</title>
        <authorList>
            <person name="Zander M."/>
            <person name="Willige B.C."/>
            <person name="He Y."/>
            <person name="Nguyen T.A."/>
            <person name="Langford A.E."/>
            <person name="Nehring R."/>
            <person name="Howell E."/>
            <person name="McGrath R."/>
            <person name="Bartlett A."/>
            <person name="Castanon R."/>
            <person name="Nery J.R."/>
            <person name="Chen H."/>
            <person name="Zhang Z."/>
            <person name="Jupe F."/>
            <person name="Stepanova A."/>
            <person name="Schmitz R.J."/>
            <person name="Lewsey M.G."/>
            <person name="Chory J."/>
            <person name="Ecker J.R."/>
        </authorList>
    </citation>
    <scope>DISRUPTION PHENOTYPE</scope>
    <scope>INTERACTION WITH EEN</scope>
    <source>
        <strain>cv. Columbia</strain>
        <strain>cv. Landsberg erecta</strain>
    </source>
</reference>
<dbReference type="EMBL" id="FJ850973">
    <property type="protein sequence ID" value="ACV53017.1"/>
    <property type="molecule type" value="Genomic_DNA"/>
</dbReference>
<dbReference type="EMBL" id="FJ850974">
    <property type="protein sequence ID" value="ACV53018.1"/>
    <property type="molecule type" value="mRNA"/>
</dbReference>
<dbReference type="EMBL" id="AP002047">
    <property type="protein sequence ID" value="BAB03145.1"/>
    <property type="status" value="ALT_SEQ"/>
    <property type="molecule type" value="Genomic_DNA"/>
</dbReference>
<dbReference type="EMBL" id="AC069474">
    <property type="protein sequence ID" value="AAG51035.1"/>
    <property type="molecule type" value="Genomic_DNA"/>
</dbReference>
<dbReference type="EMBL" id="CP002686">
    <property type="protein sequence ID" value="AEE75190.1"/>
    <property type="molecule type" value="Genomic_DNA"/>
</dbReference>
<dbReference type="EMBL" id="CP002686">
    <property type="protein sequence ID" value="AEE75191.1"/>
    <property type="molecule type" value="Genomic_DNA"/>
</dbReference>
<dbReference type="EMBL" id="AY052346">
    <property type="protein sequence ID" value="AAK96538.1"/>
    <property type="molecule type" value="mRNA"/>
</dbReference>
<dbReference type="EMBL" id="BT001061">
    <property type="protein sequence ID" value="AAN46815.1"/>
    <property type="molecule type" value="mRNA"/>
</dbReference>
<dbReference type="EMBL" id="AK318935">
    <property type="protein sequence ID" value="BAH57050.1"/>
    <property type="molecule type" value="mRNA"/>
</dbReference>
<dbReference type="RefSeq" id="NP_001189870.1">
    <molecule id="Q940Z2-2"/>
    <property type="nucleotide sequence ID" value="NM_001202941.1"/>
</dbReference>
<dbReference type="RefSeq" id="NP_566422.4">
    <molecule id="Q940Z2-1"/>
    <property type="nucleotide sequence ID" value="NM_112073.5"/>
</dbReference>
<dbReference type="SMR" id="Q940Z2"/>
<dbReference type="BioGRID" id="5750">
    <property type="interactions" value="1"/>
</dbReference>
<dbReference type="FunCoup" id="Q940Z2">
    <property type="interactions" value="3583"/>
</dbReference>
<dbReference type="IntAct" id="Q940Z2">
    <property type="interactions" value="1"/>
</dbReference>
<dbReference type="STRING" id="3702.Q940Z2"/>
<dbReference type="iPTMnet" id="Q940Z2"/>
<dbReference type="PaxDb" id="3702-AT3G12380.2"/>
<dbReference type="ProteomicsDB" id="246980">
    <molecule id="Q940Z2-1"/>
</dbReference>
<dbReference type="EnsemblPlants" id="AT3G12380.1">
    <molecule id="Q940Z2-1"/>
    <property type="protein sequence ID" value="AT3G12380.1"/>
    <property type="gene ID" value="AT3G12380"/>
</dbReference>
<dbReference type="EnsemblPlants" id="AT3G12380.2">
    <molecule id="Q940Z2-2"/>
    <property type="protein sequence ID" value="AT3G12380.2"/>
    <property type="gene ID" value="AT3G12380"/>
</dbReference>
<dbReference type="GeneID" id="820416"/>
<dbReference type="Gramene" id="AT3G12380.1">
    <molecule id="Q940Z2-1"/>
    <property type="protein sequence ID" value="AT3G12380.1"/>
    <property type="gene ID" value="AT3G12380"/>
</dbReference>
<dbReference type="Gramene" id="AT3G12380.2">
    <molecule id="Q940Z2-2"/>
    <property type="protein sequence ID" value="AT3G12380.2"/>
    <property type="gene ID" value="AT3G12380"/>
</dbReference>
<dbReference type="KEGG" id="ath:AT3G12380"/>
<dbReference type="Araport" id="AT3G12380"/>
<dbReference type="TAIR" id="AT3G12380">
    <property type="gene designation" value="ARP5"/>
</dbReference>
<dbReference type="eggNOG" id="KOG0681">
    <property type="taxonomic scope" value="Eukaryota"/>
</dbReference>
<dbReference type="InParanoid" id="Q940Z2"/>
<dbReference type="OMA" id="YPFTEHV"/>
<dbReference type="PRO" id="PR:Q940Z2"/>
<dbReference type="Proteomes" id="UP000006548">
    <property type="component" value="Chromosome 3"/>
</dbReference>
<dbReference type="ExpressionAtlas" id="Q940Z2">
    <property type="expression patterns" value="baseline and differential"/>
</dbReference>
<dbReference type="GO" id="GO:0005737">
    <property type="term" value="C:cytoplasm"/>
    <property type="evidence" value="ECO:0000314"/>
    <property type="project" value="UniProtKB"/>
</dbReference>
<dbReference type="GO" id="GO:0005654">
    <property type="term" value="C:nucleoplasm"/>
    <property type="evidence" value="ECO:0000314"/>
    <property type="project" value="UniProtKB"/>
</dbReference>
<dbReference type="GO" id="GO:0005634">
    <property type="term" value="C:nucleus"/>
    <property type="evidence" value="ECO:0000314"/>
    <property type="project" value="TAIR"/>
</dbReference>
<dbReference type="GO" id="GO:0005200">
    <property type="term" value="F:structural constituent of cytoskeleton"/>
    <property type="evidence" value="ECO:0000250"/>
    <property type="project" value="TAIR"/>
</dbReference>
<dbReference type="GO" id="GO:0030029">
    <property type="term" value="P:actin filament-based process"/>
    <property type="evidence" value="ECO:0000304"/>
    <property type="project" value="TAIR"/>
</dbReference>
<dbReference type="GO" id="GO:0006281">
    <property type="term" value="P:DNA repair"/>
    <property type="evidence" value="ECO:0000315"/>
    <property type="project" value="TAIR"/>
</dbReference>
<dbReference type="GO" id="GO:0080036">
    <property type="term" value="P:regulation of cytokinin-activated signaling pathway"/>
    <property type="evidence" value="ECO:0000315"/>
    <property type="project" value="CACAO"/>
</dbReference>
<dbReference type="GO" id="GO:0010082">
    <property type="term" value="P:regulation of root meristem growth"/>
    <property type="evidence" value="ECO:0000315"/>
    <property type="project" value="CACAO"/>
</dbReference>
<dbReference type="CDD" id="cd10211">
    <property type="entry name" value="ASKHA_NBD_Arp5"/>
    <property type="match status" value="1"/>
</dbReference>
<dbReference type="FunFam" id="3.30.420.40:FF:000194">
    <property type="entry name" value="Actin-related protein 5"/>
    <property type="match status" value="1"/>
</dbReference>
<dbReference type="FunFam" id="3.90.640.10:FF:000034">
    <property type="entry name" value="Actin-related protein 5"/>
    <property type="match status" value="1"/>
</dbReference>
<dbReference type="FunFam" id="3.30.420.40:FF:000048">
    <property type="entry name" value="ARP5 actin-related protein 5 homolog"/>
    <property type="match status" value="1"/>
</dbReference>
<dbReference type="FunFam" id="3.30.420.40:FF:000058">
    <property type="entry name" value="Putative actin-related protein 5"/>
    <property type="match status" value="1"/>
</dbReference>
<dbReference type="Gene3D" id="3.30.420.40">
    <property type="match status" value="4"/>
</dbReference>
<dbReference type="Gene3D" id="3.90.640.10">
    <property type="entry name" value="Actin, Chain A, domain 4"/>
    <property type="match status" value="2"/>
</dbReference>
<dbReference type="InterPro" id="IPR004000">
    <property type="entry name" value="Actin"/>
</dbReference>
<dbReference type="InterPro" id="IPR043129">
    <property type="entry name" value="ATPase_NBD"/>
</dbReference>
<dbReference type="PANTHER" id="PTHR11937">
    <property type="entry name" value="ACTIN"/>
    <property type="match status" value="1"/>
</dbReference>
<dbReference type="Pfam" id="PF00022">
    <property type="entry name" value="Actin"/>
    <property type="match status" value="2"/>
</dbReference>
<dbReference type="SMART" id="SM00268">
    <property type="entry name" value="ACTIN"/>
    <property type="match status" value="1"/>
</dbReference>
<dbReference type="SUPFAM" id="SSF53067">
    <property type="entry name" value="Actin-like ATPase domain"/>
    <property type="match status" value="2"/>
</dbReference>
<accession>Q940Z2</accession>
<accession>C0Z2X1</accession>
<accession>C8YXA1</accession>
<accession>F4J9R3</accession>
<accession>Q9C7A3</accession>
<accession>Q9LHH0</accession>
<gene>
    <name evidence="7" type="primary">ARP5</name>
    <name evidence="10" type="ordered locus">At3g12380</name>
    <name evidence="12" type="ORF">MQC3.19</name>
    <name evidence="11" type="ORF">T2E22.30</name>
</gene>
<evidence type="ECO:0000256" key="1">
    <source>
        <dbReference type="SAM" id="MobiDB-lite"/>
    </source>
</evidence>
<evidence type="ECO:0000269" key="2">
    <source>
    </source>
</evidence>
<evidence type="ECO:0000269" key="3">
    <source>
    </source>
</evidence>
<evidence type="ECO:0000269" key="4">
    <source>
    </source>
</evidence>
<evidence type="ECO:0000303" key="5">
    <source>
    </source>
</evidence>
<evidence type="ECO:0000303" key="6">
    <source>
    </source>
</evidence>
<evidence type="ECO:0000303" key="7">
    <source>
    </source>
</evidence>
<evidence type="ECO:0000305" key="8"/>
<evidence type="ECO:0000305" key="9">
    <source>
    </source>
</evidence>
<evidence type="ECO:0000312" key="10">
    <source>
        <dbReference type="Araport" id="AT3G12380"/>
    </source>
</evidence>
<evidence type="ECO:0000312" key="11">
    <source>
        <dbReference type="EMBL" id="AAG51035.1"/>
    </source>
</evidence>
<evidence type="ECO:0000312" key="12">
    <source>
        <dbReference type="EMBL" id="BAB03145.1"/>
    </source>
</evidence>
<evidence type="ECO:0007744" key="13">
    <source>
    </source>
</evidence>
<proteinExistence type="evidence at protein level"/>
<comment type="function">
    <text evidence="3">Probable subunit of a chromatin-remodeling complex. Involved in DNA repair. Required for multicellular development of all organs.</text>
</comment>
<comment type="subunit">
    <text evidence="4 9">Component of the INO80 chromatin-remodeling complex (Probable). Interacts with EEN (PubMed:31418686).</text>
</comment>
<comment type="subcellular location">
    <subcellularLocation>
        <location evidence="2">Nucleus</location>
    </subcellularLocation>
    <subcellularLocation>
        <location evidence="3">Nucleus</location>
        <location evidence="3">Nucleoplasm</location>
    </subcellularLocation>
    <subcellularLocation>
        <location evidence="3">Cytoplasm</location>
    </subcellularLocation>
    <text>Localized in the nucleoplasm of interphase cells (PubMed:19679120). However, dispersed into the cytoplasm in dividing cells at metaphase (PubMed:19679120).</text>
</comment>
<comment type="alternative products">
    <event type="alternative splicing"/>
    <isoform>
        <id>Q940Z2-1</id>
        <name>1</name>
        <sequence type="displayed"/>
    </isoform>
    <isoform>
        <id>Q940Z2-2</id>
        <name>2</name>
        <sequence type="described" ref="VSP_041305"/>
    </isoform>
    <isoform>
        <id>Q940Z2-3</id>
        <name>3</name>
        <sequence type="described" ref="VSP_041304"/>
    </isoform>
</comment>
<comment type="tissue specificity">
    <text evidence="3">Expressed ubiquitously in seedlings, roots, leaves, buds, flowers and siliques.</text>
</comment>
<comment type="disruption phenotype">
    <text evidence="3 4">Moderately dwarfed plants with small organs composed of small-sized cells (PubMed:19679120). Higher density of developmentally delayed stomata (PubMed:19679120). Hypersensitivity to DNA-damaging reagents such as hydroxyurea, methylmethane sulfonate, and bleocin (PubMed:19679120). Differential expression of several genes (PubMed:31418686). The double mutant ref6-1 arp5-1 is insensitive to ethylene (ET) and exhibits reduced levels of EIN2 associated with a shift of the chromatin landscape to a repressive state at its locus (e.g. H3K27me3 and H2A.Z) (PubMed:31418686).</text>
</comment>
<comment type="similarity">
    <text evidence="8">Belongs to the actin family. ARP5 subfamily.</text>
</comment>
<comment type="sequence caution" evidence="8">
    <conflict type="erroneous gene model prediction">
        <sequence resource="EMBL-CDS" id="BAB03145"/>
    </conflict>
</comment>
<protein>
    <recommendedName>
        <fullName evidence="7">Actin-related protein 5</fullName>
    </recommendedName>
</protein>
<name>ARP5_ARATH</name>
<feature type="chain" id="PRO_0000320532" description="Actin-related protein 5">
    <location>
        <begin position="1"/>
        <end position="724"/>
    </location>
</feature>
<feature type="region of interest" description="Disordered" evidence="1">
    <location>
        <begin position="358"/>
        <end position="391"/>
    </location>
</feature>
<feature type="region of interest" description="Disordered" evidence="1">
    <location>
        <begin position="412"/>
        <end position="450"/>
    </location>
</feature>
<feature type="region of interest" description="Disordered" evidence="1">
    <location>
        <begin position="467"/>
        <end position="488"/>
    </location>
</feature>
<feature type="compositionally biased region" description="Basic and acidic residues" evidence="1">
    <location>
        <begin position="414"/>
        <end position="446"/>
    </location>
</feature>
<feature type="modified residue" description="Phosphoserine" evidence="13">
    <location>
        <position position="542"/>
    </location>
</feature>
<feature type="splice variant" id="VSP_041304" description="In isoform 3." evidence="5">
    <location>
        <begin position="1"/>
        <end position="134"/>
    </location>
</feature>
<feature type="splice variant" id="VSP_041305" description="In isoform 2." evidence="6">
    <original>A</original>
    <variation>ATVLLSS</variation>
    <location>
        <position position="56"/>
    </location>
</feature>
<feature type="sequence conflict" description="In Ref. 6; BAH57050." evidence="8" ref="6">
    <original>K</original>
    <variation>R</variation>
    <location>
        <position position="55"/>
    </location>
</feature>